<comment type="function">
    <text evidence="5 6 8 9 10 11 13 14">Required for cell migration and engulfment of cell corpses but not for programmed cell death/apoptosis (PubMed:10707082, PubMed:11449278, PubMed:15744306, PubMed:1936965, PubMed:19402756, PubMed:20226672, PubMed:6857247). Has a role in the migration of the 2 gonadal distal tip cells (DTCs) (PubMed:10707082). Plays a role in protecting dopaminergic neurons from oxidative stress-induced degeneration (PubMed:29346382).</text>
</comment>
<comment type="subunit">
    <text evidence="5 7 11 12">Interacts with ced-5 (via C-terminus which contains a candidate SH3-binding, proline-rich region) (PubMed:10707082, PubMed:11703940, PubMed:21616056). Forms a ternary complex with ced-5 and ced-12 (PubMed:11703940). Interacts (via SH2 domain) with src-1 (when activated and phosphorylated at 'Tyr-416') (PubMed:20226672).</text>
</comment>
<comment type="disruption phenotype">
    <text evidence="5 6 8 9 10 14">Dead cells/corpses fail to be engulfed. Defective in the migration of distal tip cells and gonad development. Actin halos are absent.</text>
</comment>
<comment type="similarity">
    <text evidence="1">Belongs to the CRK family.</text>
</comment>
<organism>
    <name type="scientific">Caenorhabditis elegans</name>
    <dbReference type="NCBI Taxonomy" id="6239"/>
    <lineage>
        <taxon>Eukaryota</taxon>
        <taxon>Metazoa</taxon>
        <taxon>Ecdysozoa</taxon>
        <taxon>Nematoda</taxon>
        <taxon>Chromadorea</taxon>
        <taxon>Rhabditida</taxon>
        <taxon>Rhabditina</taxon>
        <taxon>Rhabditomorpha</taxon>
        <taxon>Rhabditoidea</taxon>
        <taxon>Rhabditidae</taxon>
        <taxon>Peloderinae</taxon>
        <taxon>Caenorhabditis</taxon>
    </lineage>
</organism>
<accession>Q9NHC3</accession>
<keyword id="KW-0002">3D-structure</keyword>
<keyword id="KW-0581">Phagocytosis</keyword>
<keyword id="KW-1185">Reference proteome</keyword>
<keyword id="KW-0677">Repeat</keyword>
<keyword id="KW-0727">SH2 domain</keyword>
<keyword id="KW-0728">SH3 domain</keyword>
<reference evidence="16 17" key="1">
    <citation type="journal article" date="2000" name="Nat. Cell Biol.">
        <title>CED-2/CrkII and CED-10/Rac control phagocytosis and cell migration in Caenorhabditis elegans.</title>
        <authorList>
            <person name="Reddien P.W."/>
            <person name="Horvitz H.R."/>
        </authorList>
    </citation>
    <scope>NUCLEOTIDE SEQUENCE [MRNA]</scope>
    <scope>FUNCTION</scope>
    <scope>INTERACTION WITH CED-5</scope>
    <scope>DISRUPTION PHENOTYPE</scope>
</reference>
<reference key="2">
    <citation type="journal article" date="1998" name="Science">
        <title>Genome sequence of the nematode C. elegans: a platform for investigating biology.</title>
        <authorList>
            <consortium name="The C. elegans sequencing consortium"/>
        </authorList>
    </citation>
    <scope>NUCLEOTIDE SEQUENCE [LARGE SCALE GENOMIC DNA]</scope>
    <source>
        <strain>Bristol N2</strain>
    </source>
</reference>
<reference evidence="16" key="3">
    <citation type="journal article" date="1983" name="Science">
        <title>Mutations affecting programmed cell deaths in the nematode Caenorhabditis elegans.</title>
        <authorList>
            <person name="Hedgecock E.M."/>
            <person name="Sulston J.E."/>
            <person name="Thomson J.N."/>
        </authorList>
    </citation>
    <scope>FUNCTION</scope>
    <scope>DISRUPTION PHENOTYPE</scope>
</reference>
<reference evidence="16" key="4">
    <citation type="journal article" date="1991" name="Genetics">
        <title>Genes required for the engulfment of cell corpses during programmed cell death in Caenorhabditis elegans.</title>
        <authorList>
            <person name="Ellis R.E."/>
            <person name="Jacobson D.M."/>
            <person name="Horvitz H.R."/>
        </authorList>
    </citation>
    <scope>FUNCTION</scope>
    <scope>DISRUPTION PHENOTYPE</scope>
</reference>
<reference evidence="16" key="5">
    <citation type="journal article" date="2001" name="Dev. Cell">
        <title>C. elegans CED-12 acts in the conserved crkII/DOCK180/Rac pathway to control cell migration and cell corpse engulfment.</title>
        <authorList>
            <person name="Wu Y.-C."/>
            <person name="Tsai M.-C."/>
            <person name="Cheng L.-C."/>
            <person name="Chou C.-J."/>
            <person name="Weng N.-Y."/>
        </authorList>
    </citation>
    <scope>IDENTIFICATION IN A TERNARY COMPLEX WITH CED-5 AND CED-12</scope>
</reference>
<reference evidence="16" key="6">
    <citation type="journal article" date="2001" name="Nature">
        <title>Phagocytosis promotes programmed cell death in C. elegans.</title>
        <authorList>
            <person name="Reddien P.W."/>
            <person name="Cameron S."/>
            <person name="Horvitz H.R."/>
        </authorList>
    </citation>
    <scope>FUNCTION</scope>
    <scope>DISRUPTION PHENOTYPE</scope>
</reference>
<reference evidence="16" key="7">
    <citation type="journal article" date="2005" name="Nature">
        <title>Two pathways converge at CED-10 to mediate actin rearrangement and corpse removal in C. elegans.</title>
        <authorList>
            <person name="Kinchen J.M."/>
            <person name="Cabello J."/>
            <person name="Klingele D."/>
            <person name="Wong K."/>
            <person name="Feichtinger R."/>
            <person name="Schnabel H."/>
            <person name="Schnabel R."/>
            <person name="Hengartner M.O."/>
        </authorList>
    </citation>
    <scope>FUNCTION</scope>
    <scope>DISRUPTION PHENOTYPE</scope>
</reference>
<reference evidence="16" key="8">
    <citation type="journal article" date="2009" name="PLoS Biol.">
        <title>Abl kinase inhibits the engulfment of apopotic cells in Caenorhabditis elegans.</title>
        <authorList>
            <person name="Hurwitz M.E."/>
            <person name="Vanderzalm P.J."/>
            <person name="Bloom L."/>
            <person name="Goldman J."/>
            <person name="Garriga G."/>
            <person name="Horvitz H.R."/>
        </authorList>
    </citation>
    <scope>FUNCTION</scope>
    <scope>DISRUPTION PHENOTYPE</scope>
</reference>
<reference key="9">
    <citation type="journal article" date="2010" name="Curr. Biol.">
        <title>Engulfment of apoptotic cells in C. elegans is mediated by integrin alpha/SRC signaling.</title>
        <authorList>
            <person name="Hsu T.Y."/>
            <person name="Wu Y.C."/>
        </authorList>
    </citation>
    <scope>FUNCTION</scope>
    <scope>INTERACTION WITH SRC-1</scope>
</reference>
<reference key="10">
    <citation type="journal article" date="2018" name="PLoS Genet.">
        <title>6-OHDA-induced dopaminergic neurodegeneration in Caenorhabditis elegans is promoted by the engulfment pathway and inhibited by the transthyretin-related protein TTR-33.</title>
        <authorList>
            <person name="Offenburger S.L."/>
            <person name="Ho X.Y."/>
            <person name="Tachie-Menson T."/>
            <person name="Coakley S."/>
            <person name="Hilliard M.A."/>
            <person name="Gartner A."/>
        </authorList>
    </citation>
    <scope>FUNCTION</scope>
    <scope>MUTAGENESIS OF 153-TRP--GLU-279</scope>
</reference>
<reference key="11">
    <citation type="journal article" date="2011" name="Biochem. Biophys. Res. Commun.">
        <title>Crystal structure of the cell corpse engulfment protein CED-2 in Caenorhabditis elegans.</title>
        <authorList>
            <person name="Kang Y."/>
            <person name="Xu J."/>
            <person name="Liu Y."/>
            <person name="Sun J."/>
            <person name="Sun D."/>
            <person name="Hu Y."/>
            <person name="Liu Y."/>
        </authorList>
    </citation>
    <scope>X-RAY CRYSTALLOGRAPHY (2.52 ANGSTROMS)</scope>
    <scope>INTERACTION WITH CED-5</scope>
</reference>
<sequence length="279" mass="30879">MTTNGFDPFEWRSFYFPGMSREEAHKLLGEPQVSIGTFLMRDSSRPGEYSLTVREADEGNAVCHYLIERGEPKEDGTAAAGVKIANQSFPDIPALLNHFKMRVLTEASLLAAYKKPIIEVVVGTFKFTGERETDLPFEQGERLEILSKTNQDWWEARNALGTTGLVPANYVQIQMEFHNDRTSKGASQSSIGSSGGGAERFSSASTSSDNIELQPRLPAKAKVTFDRVPNAYDPTQLRVKKGQTVLVTQKMSNGMYKAELDGQIGSVPHTYLRFTAVSE</sequence>
<feature type="chain" id="PRO_0000379934" description="Cell death abnormality protein 2">
    <location>
        <begin position="1"/>
        <end position="279"/>
    </location>
</feature>
<feature type="domain" description="SH2" evidence="2">
    <location>
        <begin position="14"/>
        <end position="115"/>
    </location>
</feature>
<feature type="domain" description="SH3 1" evidence="3">
    <location>
        <begin position="116"/>
        <end position="176"/>
    </location>
</feature>
<feature type="domain" description="SH3 2" evidence="3">
    <location>
        <begin position="214"/>
        <end position="277"/>
    </location>
</feature>
<feature type="region of interest" description="Disordered" evidence="4">
    <location>
        <begin position="181"/>
        <end position="213"/>
    </location>
</feature>
<feature type="compositionally biased region" description="Polar residues" evidence="4">
    <location>
        <begin position="202"/>
        <end position="211"/>
    </location>
</feature>
<feature type="mutagenesis site" description="In e1752; dopaminergic neurodegeneration in 60% of animals in response to oxidative stress induced by the neurotoxin 6-hydroxydopamine (6-OHDA)." evidence="13">
    <location>
        <begin position="153"/>
        <end position="279"/>
    </location>
</feature>
<feature type="helix" evidence="19">
    <location>
        <begin position="8"/>
        <end position="14"/>
    </location>
</feature>
<feature type="helix" evidence="19">
    <location>
        <begin position="21"/>
        <end position="29"/>
    </location>
</feature>
<feature type="strand" evidence="19">
    <location>
        <begin position="37"/>
        <end position="42"/>
    </location>
</feature>
<feature type="strand" evidence="19">
    <location>
        <begin position="49"/>
        <end position="54"/>
    </location>
</feature>
<feature type="strand" evidence="19">
    <location>
        <begin position="57"/>
        <end position="60"/>
    </location>
</feature>
<feature type="strand" evidence="19">
    <location>
        <begin position="62"/>
        <end position="69"/>
    </location>
</feature>
<feature type="strand" evidence="19">
    <location>
        <begin position="76"/>
        <end position="78"/>
    </location>
</feature>
<feature type="strand" evidence="19">
    <location>
        <begin position="82"/>
        <end position="84"/>
    </location>
</feature>
<feature type="strand" evidence="19">
    <location>
        <begin position="87"/>
        <end position="91"/>
    </location>
</feature>
<feature type="helix" evidence="19">
    <location>
        <begin position="92"/>
        <end position="98"/>
    </location>
</feature>
<feature type="strand" evidence="19">
    <location>
        <begin position="104"/>
        <end position="106"/>
    </location>
</feature>
<feature type="strand" evidence="19">
    <location>
        <begin position="118"/>
        <end position="125"/>
    </location>
</feature>
<feature type="strand" evidence="19">
    <location>
        <begin position="142"/>
        <end position="147"/>
    </location>
</feature>
<feature type="strand" evidence="19">
    <location>
        <begin position="150"/>
        <end position="157"/>
    </location>
</feature>
<feature type="strand" evidence="19">
    <location>
        <begin position="163"/>
        <end position="167"/>
    </location>
</feature>
<feature type="helix" evidence="19">
    <location>
        <begin position="168"/>
        <end position="170"/>
    </location>
</feature>
<feature type="strand" evidence="19">
    <location>
        <begin position="171"/>
        <end position="173"/>
    </location>
</feature>
<proteinExistence type="evidence at protein level"/>
<evidence type="ECO:0000255" key="1"/>
<evidence type="ECO:0000255" key="2">
    <source>
        <dbReference type="PROSITE-ProRule" id="PRU00191"/>
    </source>
</evidence>
<evidence type="ECO:0000255" key="3">
    <source>
        <dbReference type="PROSITE-ProRule" id="PRU00192"/>
    </source>
</evidence>
<evidence type="ECO:0000256" key="4">
    <source>
        <dbReference type="SAM" id="MobiDB-lite"/>
    </source>
</evidence>
<evidence type="ECO:0000269" key="5">
    <source>
    </source>
</evidence>
<evidence type="ECO:0000269" key="6">
    <source>
    </source>
</evidence>
<evidence type="ECO:0000269" key="7">
    <source>
    </source>
</evidence>
<evidence type="ECO:0000269" key="8">
    <source>
    </source>
</evidence>
<evidence type="ECO:0000269" key="9">
    <source>
    </source>
</evidence>
<evidence type="ECO:0000269" key="10">
    <source>
    </source>
</evidence>
<evidence type="ECO:0000269" key="11">
    <source>
    </source>
</evidence>
<evidence type="ECO:0000269" key="12">
    <source>
    </source>
</evidence>
<evidence type="ECO:0000269" key="13">
    <source>
    </source>
</evidence>
<evidence type="ECO:0000269" key="14">
    <source>
    </source>
</evidence>
<evidence type="ECO:0000303" key="15">
    <source>
    </source>
</evidence>
<evidence type="ECO:0000305" key="16"/>
<evidence type="ECO:0000312" key="17">
    <source>
        <dbReference type="EMBL" id="AAF33845.1"/>
    </source>
</evidence>
<evidence type="ECO:0000312" key="18">
    <source>
        <dbReference type="WormBase" id="Y41D4B.13a"/>
    </source>
</evidence>
<evidence type="ECO:0007829" key="19">
    <source>
        <dbReference type="PDB" id="3QWX"/>
    </source>
</evidence>
<gene>
    <name evidence="18" type="primary">ced-2</name>
    <name evidence="18" type="ORF">Y41D4B.13</name>
</gene>
<dbReference type="EMBL" id="AF226866">
    <property type="protein sequence ID" value="AAF33845.1"/>
    <property type="molecule type" value="mRNA"/>
</dbReference>
<dbReference type="EMBL" id="BX284604">
    <property type="protein sequence ID" value="CCD66714.1"/>
    <property type="molecule type" value="Genomic_DNA"/>
</dbReference>
<dbReference type="RefSeq" id="NP_500105.1">
    <property type="nucleotide sequence ID" value="NM_067704.7"/>
</dbReference>
<dbReference type="PDB" id="3QWX">
    <property type="method" value="X-ray"/>
    <property type="resolution" value="2.01 A"/>
    <property type="chains" value="X=1-174"/>
</dbReference>
<dbReference type="PDB" id="3QWY">
    <property type="method" value="X-ray"/>
    <property type="resolution" value="2.52 A"/>
    <property type="chains" value="A/B=1-279"/>
</dbReference>
<dbReference type="PDBsum" id="3QWX"/>
<dbReference type="PDBsum" id="3QWY"/>
<dbReference type="SMR" id="Q9NHC3"/>
<dbReference type="BioGRID" id="42124">
    <property type="interactions" value="11"/>
</dbReference>
<dbReference type="DIP" id="DIP-25408N"/>
<dbReference type="FunCoup" id="Q9NHC3">
    <property type="interactions" value="2459"/>
</dbReference>
<dbReference type="IntAct" id="Q9NHC3">
    <property type="interactions" value="6"/>
</dbReference>
<dbReference type="STRING" id="6239.Y41D4B.13a.1"/>
<dbReference type="PaxDb" id="6239-Y41D4B.13a"/>
<dbReference type="PeptideAtlas" id="Q9NHC3"/>
<dbReference type="EnsemblMetazoa" id="Y41D4B.13a.1">
    <property type="protein sequence ID" value="Y41D4B.13a.1"/>
    <property type="gene ID" value="WBGene00000416"/>
</dbReference>
<dbReference type="GeneID" id="176968"/>
<dbReference type="KEGG" id="cel:CELE_Y41D4B.13"/>
<dbReference type="UCSC" id="Y41D4B.13">
    <property type="organism name" value="c. elegans"/>
</dbReference>
<dbReference type="AGR" id="WB:WBGene00000416"/>
<dbReference type="CTD" id="176968"/>
<dbReference type="WormBase" id="Y41D4B.13a">
    <property type="protein sequence ID" value="CE28360"/>
    <property type="gene ID" value="WBGene00000416"/>
    <property type="gene designation" value="ced-2"/>
</dbReference>
<dbReference type="eggNOG" id="KOG4792">
    <property type="taxonomic scope" value="Eukaryota"/>
</dbReference>
<dbReference type="HOGENOM" id="CLU_060542_0_0_1"/>
<dbReference type="InParanoid" id="Q9NHC3"/>
<dbReference type="OMA" id="NGMYKAE"/>
<dbReference type="OrthoDB" id="9204160at2759"/>
<dbReference type="PhylomeDB" id="Q9NHC3"/>
<dbReference type="Reactome" id="R-CEL-186763">
    <property type="pathway name" value="Downstream signal transduction"/>
</dbReference>
<dbReference type="Reactome" id="R-CEL-8849471">
    <property type="pathway name" value="PTK6 Regulates RHO GTPases, RAS GTPase and MAP kinases"/>
</dbReference>
<dbReference type="Reactome" id="R-CEL-8875555">
    <property type="pathway name" value="MET activates RAP1 and RAC1"/>
</dbReference>
<dbReference type="Reactome" id="R-CEL-8875656">
    <property type="pathway name" value="MET receptor recycling"/>
</dbReference>
<dbReference type="Reactome" id="R-CEL-912631">
    <property type="pathway name" value="Regulation of signaling by CBL"/>
</dbReference>
<dbReference type="SignaLink" id="Q9NHC3"/>
<dbReference type="EvolutionaryTrace" id="Q9NHC3"/>
<dbReference type="PRO" id="PR:Q9NHC3"/>
<dbReference type="Proteomes" id="UP000001940">
    <property type="component" value="Chromosome IV"/>
</dbReference>
<dbReference type="Bgee" id="WBGene00000416">
    <property type="expression patterns" value="Expressed in germ line (C elegans) and 4 other cell types or tissues"/>
</dbReference>
<dbReference type="ExpressionAtlas" id="Q9NHC3">
    <property type="expression patterns" value="baseline and differential"/>
</dbReference>
<dbReference type="GO" id="GO:0005737">
    <property type="term" value="C:cytoplasm"/>
    <property type="evidence" value="ECO:0000318"/>
    <property type="project" value="GO_Central"/>
</dbReference>
<dbReference type="GO" id="GO:0005886">
    <property type="term" value="C:plasma membrane"/>
    <property type="evidence" value="ECO:0000303"/>
    <property type="project" value="WormBase"/>
</dbReference>
<dbReference type="GO" id="GO:0044877">
    <property type="term" value="F:protein-containing complex binding"/>
    <property type="evidence" value="ECO:0000353"/>
    <property type="project" value="UniProtKB"/>
</dbReference>
<dbReference type="GO" id="GO:0030971">
    <property type="term" value="F:receptor tyrosine kinase binding"/>
    <property type="evidence" value="ECO:0000318"/>
    <property type="project" value="GO_Central"/>
</dbReference>
<dbReference type="GO" id="GO:0035591">
    <property type="term" value="F:signaling adaptor activity"/>
    <property type="evidence" value="ECO:0000318"/>
    <property type="project" value="GO_Central"/>
</dbReference>
<dbReference type="GO" id="GO:0030036">
    <property type="term" value="P:actin cytoskeleton organization"/>
    <property type="evidence" value="ECO:0000315"/>
    <property type="project" value="UniProtKB"/>
</dbReference>
<dbReference type="GO" id="GO:0006915">
    <property type="term" value="P:apoptotic process"/>
    <property type="evidence" value="ECO:0000315"/>
    <property type="project" value="UniProtKB"/>
</dbReference>
<dbReference type="GO" id="GO:1902742">
    <property type="term" value="P:apoptotic process involved in development"/>
    <property type="evidence" value="ECO:0000315"/>
    <property type="project" value="UniProtKB"/>
</dbReference>
<dbReference type="GO" id="GO:0016477">
    <property type="term" value="P:cell migration"/>
    <property type="evidence" value="ECO:0000315"/>
    <property type="project" value="UniProtKB"/>
</dbReference>
<dbReference type="GO" id="GO:0043652">
    <property type="term" value="P:engulfment of apoptotic cell"/>
    <property type="evidence" value="ECO:0000315"/>
    <property type="project" value="UniProtKB"/>
</dbReference>
<dbReference type="GO" id="GO:0007167">
    <property type="term" value="P:enzyme-linked receptor protein signaling pathway"/>
    <property type="evidence" value="ECO:0000318"/>
    <property type="project" value="GO_Central"/>
</dbReference>
<dbReference type="GO" id="GO:1903356">
    <property type="term" value="P:positive regulation of distal tip cell migration"/>
    <property type="evidence" value="ECO:0000315"/>
    <property type="project" value="UniProtKB"/>
</dbReference>
<dbReference type="GO" id="GO:1901076">
    <property type="term" value="P:positive regulation of engulfment of apoptotic cell"/>
    <property type="evidence" value="ECO:0000315"/>
    <property type="project" value="UniProtKB"/>
</dbReference>
<dbReference type="GO" id="GO:0012501">
    <property type="term" value="P:programmed cell death"/>
    <property type="evidence" value="ECO:0000315"/>
    <property type="project" value="WormBase"/>
</dbReference>
<dbReference type="GO" id="GO:0007165">
    <property type="term" value="P:signal transduction"/>
    <property type="evidence" value="ECO:0000315"/>
    <property type="project" value="UniProtKB"/>
</dbReference>
<dbReference type="CDD" id="cd11767">
    <property type="entry name" value="SH3_Nck_3"/>
    <property type="match status" value="1"/>
</dbReference>
<dbReference type="DisProt" id="DP00868"/>
<dbReference type="FunFam" id="2.30.30.40:FF:000356">
    <property type="entry name" value="Cell death abnormality protein 2"/>
    <property type="match status" value="1"/>
</dbReference>
<dbReference type="FunFam" id="3.30.505.10:FF:000110">
    <property type="entry name" value="Cell death abnormality protein 2"/>
    <property type="match status" value="1"/>
</dbReference>
<dbReference type="Gene3D" id="3.30.505.10">
    <property type="entry name" value="SH2 domain"/>
    <property type="match status" value="1"/>
</dbReference>
<dbReference type="Gene3D" id="2.30.30.40">
    <property type="entry name" value="SH3 Domains"/>
    <property type="match status" value="2"/>
</dbReference>
<dbReference type="InterPro" id="IPR000980">
    <property type="entry name" value="SH2"/>
</dbReference>
<dbReference type="InterPro" id="IPR036860">
    <property type="entry name" value="SH2_dom_sf"/>
</dbReference>
<dbReference type="InterPro" id="IPR036028">
    <property type="entry name" value="SH3-like_dom_sf"/>
</dbReference>
<dbReference type="InterPro" id="IPR001452">
    <property type="entry name" value="SH3_domain"/>
</dbReference>
<dbReference type="InterPro" id="IPR051184">
    <property type="entry name" value="Tyrosine-phos_adapter"/>
</dbReference>
<dbReference type="PANTHER" id="PTHR19969:SF5">
    <property type="entry name" value="CRK-LIKE PROTEIN"/>
    <property type="match status" value="1"/>
</dbReference>
<dbReference type="PANTHER" id="PTHR19969">
    <property type="entry name" value="SH2-SH3 ADAPTOR PROTEIN-RELATED"/>
    <property type="match status" value="1"/>
</dbReference>
<dbReference type="Pfam" id="PF00017">
    <property type="entry name" value="SH2"/>
    <property type="match status" value="1"/>
</dbReference>
<dbReference type="Pfam" id="PF00018">
    <property type="entry name" value="SH3_1"/>
    <property type="match status" value="1"/>
</dbReference>
<dbReference type="Pfam" id="PF07653">
    <property type="entry name" value="SH3_2"/>
    <property type="match status" value="1"/>
</dbReference>
<dbReference type="PRINTS" id="PR00401">
    <property type="entry name" value="SH2DOMAIN"/>
</dbReference>
<dbReference type="PRINTS" id="PR00452">
    <property type="entry name" value="SH3DOMAIN"/>
</dbReference>
<dbReference type="SMART" id="SM00252">
    <property type="entry name" value="SH2"/>
    <property type="match status" value="1"/>
</dbReference>
<dbReference type="SMART" id="SM00326">
    <property type="entry name" value="SH3"/>
    <property type="match status" value="2"/>
</dbReference>
<dbReference type="SUPFAM" id="SSF55550">
    <property type="entry name" value="SH2 domain"/>
    <property type="match status" value="1"/>
</dbReference>
<dbReference type="SUPFAM" id="SSF50044">
    <property type="entry name" value="SH3-domain"/>
    <property type="match status" value="2"/>
</dbReference>
<dbReference type="PROSITE" id="PS50001">
    <property type="entry name" value="SH2"/>
    <property type="match status" value="1"/>
</dbReference>
<dbReference type="PROSITE" id="PS50002">
    <property type="entry name" value="SH3"/>
    <property type="match status" value="2"/>
</dbReference>
<name>CED2_CAEEL</name>
<protein>
    <recommendedName>
        <fullName evidence="15">Cell death abnormality protein 2</fullName>
    </recommendedName>
    <alternativeName>
        <fullName evidence="17">Cell-corpse engulfment protein CED-2</fullName>
    </alternativeName>
</protein>